<feature type="chain" id="PRO_1000022105" description="Isoleucine--tRNA ligase">
    <location>
        <begin position="1"/>
        <end position="943"/>
    </location>
</feature>
<feature type="short sequence motif" description="'HIGH' region">
    <location>
        <begin position="58"/>
        <end position="68"/>
    </location>
</feature>
<feature type="short sequence motif" description="'KMSKS' region">
    <location>
        <begin position="608"/>
        <end position="612"/>
    </location>
</feature>
<feature type="binding site" evidence="1">
    <location>
        <position position="567"/>
    </location>
    <ligand>
        <name>L-isoleucyl-5'-AMP</name>
        <dbReference type="ChEBI" id="CHEBI:178002"/>
    </ligand>
</feature>
<feature type="binding site" evidence="1">
    <location>
        <position position="611"/>
    </location>
    <ligand>
        <name>ATP</name>
        <dbReference type="ChEBI" id="CHEBI:30616"/>
    </ligand>
</feature>
<feature type="binding site" evidence="1">
    <location>
        <position position="906"/>
    </location>
    <ligand>
        <name>Zn(2+)</name>
        <dbReference type="ChEBI" id="CHEBI:29105"/>
    </ligand>
</feature>
<feature type="binding site" evidence="1">
    <location>
        <position position="909"/>
    </location>
    <ligand>
        <name>Zn(2+)</name>
        <dbReference type="ChEBI" id="CHEBI:29105"/>
    </ligand>
</feature>
<feature type="binding site" evidence="1">
    <location>
        <position position="926"/>
    </location>
    <ligand>
        <name>Zn(2+)</name>
        <dbReference type="ChEBI" id="CHEBI:29105"/>
    </ligand>
</feature>
<feature type="binding site" evidence="1">
    <location>
        <position position="929"/>
    </location>
    <ligand>
        <name>Zn(2+)</name>
        <dbReference type="ChEBI" id="CHEBI:29105"/>
    </ligand>
</feature>
<gene>
    <name evidence="1" type="primary">ileS</name>
    <name type="ordered locus">PSEEN4692</name>
</gene>
<sequence length="943" mass="105922">MTDYKATLNLPDTAFPMKAGLPQREPQILQRWDSIGLYGKLREIGKDRPKFVLHDGPPYANGKIHIGHALNKILKDMIVRSKTLSGFDAPYVPGWDCHGLPIEHKVEVTHGKHLTADRTRELCREYAAEQIEGQKTEFIRLGVLGDWDNPYKTMNFANEAGEIRALAEMVKQGFVFKGLKPVNWCFDCGSALAEAEVEYADKKSQTIDVAFPVADADKLAAAFGLSALAKPAAIVIWTTTPWTIPANQALNIHPDFKYALVDTGERLLVLAEELVESCLKRYNLEGSVIATAQGSALELINFRHPFYDRLSPIYLAEYVELGAGTGVVHSSPAYGEDDFVTCKRYGMVNEDILTPVQSNGVYVESLPFFGGQFIWKANPAIVDKLSEVGALMHTETISHSYMHCWRHKTPLIYRATAQWFVGMDKQPSTGEPLRERALKAIEETKFVPAWGQARLHSMIANRPDWCISRQRNWGVPIPFFLDKQTGELHPRTVELMEEVAKRVEQEGIEAWFKLDAQELLGDEAGQYDKITDTLDVWFDSGTTHWHVLRGSHDIGHATGPRADLYLEGSDQHRGWFHSSLLTGCAIDGHAPYRELLTHGFTVDENGRKMSKSLGNTIEPQKVNDTLGADILRLWVSATDYSGEMAVSEQILQRSADAYRRIRNTARFLLSNLSGFDPARDLLPAEDMLALDRWAVDRTLLLQRELEEHYSEYRFWNVYSKVHNFCVQELGGFYLDIIKDRQYTTGANSVARRSCQTALYHISEALVRWIAPILAFTADEIWQYLPGERNESVMLNTWYEGLSELPADAELDRAYWDRVMAVKAAVNKELENQRTAKVIGGNLQAEVTLFAEEGLTADLNKLGDELRFVLITSAASVVPFVQAPADAVTTEVEGLKLKVVKSGHAKCGRCWHFRADVGSHPEHPEICGRCVDNLNGSGEVRHYA</sequence>
<accession>Q1I4S5</accession>
<evidence type="ECO:0000255" key="1">
    <source>
        <dbReference type="HAMAP-Rule" id="MF_02002"/>
    </source>
</evidence>
<name>SYI_PSEE4</name>
<comment type="function">
    <text evidence="1">Catalyzes the attachment of isoleucine to tRNA(Ile). As IleRS can inadvertently accommodate and process structurally similar amino acids such as valine, to avoid such errors it has two additional distinct tRNA(Ile)-dependent editing activities. One activity is designated as 'pretransfer' editing and involves the hydrolysis of activated Val-AMP. The other activity is designated 'posttransfer' editing and involves deacylation of mischarged Val-tRNA(Ile).</text>
</comment>
<comment type="catalytic activity">
    <reaction evidence="1">
        <text>tRNA(Ile) + L-isoleucine + ATP = L-isoleucyl-tRNA(Ile) + AMP + diphosphate</text>
        <dbReference type="Rhea" id="RHEA:11060"/>
        <dbReference type="Rhea" id="RHEA-COMP:9666"/>
        <dbReference type="Rhea" id="RHEA-COMP:9695"/>
        <dbReference type="ChEBI" id="CHEBI:30616"/>
        <dbReference type="ChEBI" id="CHEBI:33019"/>
        <dbReference type="ChEBI" id="CHEBI:58045"/>
        <dbReference type="ChEBI" id="CHEBI:78442"/>
        <dbReference type="ChEBI" id="CHEBI:78528"/>
        <dbReference type="ChEBI" id="CHEBI:456215"/>
        <dbReference type="EC" id="6.1.1.5"/>
    </reaction>
</comment>
<comment type="cofactor">
    <cofactor evidence="1">
        <name>Zn(2+)</name>
        <dbReference type="ChEBI" id="CHEBI:29105"/>
    </cofactor>
    <text evidence="1">Binds 1 zinc ion per subunit.</text>
</comment>
<comment type="subunit">
    <text evidence="1">Monomer.</text>
</comment>
<comment type="subcellular location">
    <subcellularLocation>
        <location evidence="1">Cytoplasm</location>
    </subcellularLocation>
</comment>
<comment type="domain">
    <text evidence="1">IleRS has two distinct active sites: one for aminoacylation and one for editing. The misactivated valine is translocated from the active site to the editing site, which sterically excludes the correctly activated isoleucine. The single editing site contains two valyl binding pockets, one specific for each substrate (Val-AMP or Val-tRNA(Ile)).</text>
</comment>
<comment type="similarity">
    <text evidence="1">Belongs to the class-I aminoacyl-tRNA synthetase family. IleS type 1 subfamily.</text>
</comment>
<keyword id="KW-0030">Aminoacyl-tRNA synthetase</keyword>
<keyword id="KW-0067">ATP-binding</keyword>
<keyword id="KW-0963">Cytoplasm</keyword>
<keyword id="KW-0436">Ligase</keyword>
<keyword id="KW-0479">Metal-binding</keyword>
<keyword id="KW-0547">Nucleotide-binding</keyword>
<keyword id="KW-0648">Protein biosynthesis</keyword>
<keyword id="KW-0862">Zinc</keyword>
<organism>
    <name type="scientific">Pseudomonas entomophila (strain L48)</name>
    <dbReference type="NCBI Taxonomy" id="384676"/>
    <lineage>
        <taxon>Bacteria</taxon>
        <taxon>Pseudomonadati</taxon>
        <taxon>Pseudomonadota</taxon>
        <taxon>Gammaproteobacteria</taxon>
        <taxon>Pseudomonadales</taxon>
        <taxon>Pseudomonadaceae</taxon>
        <taxon>Pseudomonas</taxon>
    </lineage>
</organism>
<dbReference type="EC" id="6.1.1.5" evidence="1"/>
<dbReference type="EMBL" id="CT573326">
    <property type="protein sequence ID" value="CAK17361.1"/>
    <property type="molecule type" value="Genomic_DNA"/>
</dbReference>
<dbReference type="RefSeq" id="WP_011535726.1">
    <property type="nucleotide sequence ID" value="NC_008027.1"/>
</dbReference>
<dbReference type="SMR" id="Q1I4S5"/>
<dbReference type="STRING" id="384676.PSEEN4692"/>
<dbReference type="GeneID" id="32807662"/>
<dbReference type="KEGG" id="pen:PSEEN4692"/>
<dbReference type="eggNOG" id="COG0060">
    <property type="taxonomic scope" value="Bacteria"/>
</dbReference>
<dbReference type="HOGENOM" id="CLU_001493_7_1_6"/>
<dbReference type="OrthoDB" id="9810365at2"/>
<dbReference type="Proteomes" id="UP000000658">
    <property type="component" value="Chromosome"/>
</dbReference>
<dbReference type="GO" id="GO:0005829">
    <property type="term" value="C:cytosol"/>
    <property type="evidence" value="ECO:0007669"/>
    <property type="project" value="TreeGrafter"/>
</dbReference>
<dbReference type="GO" id="GO:0002161">
    <property type="term" value="F:aminoacyl-tRNA deacylase activity"/>
    <property type="evidence" value="ECO:0007669"/>
    <property type="project" value="InterPro"/>
</dbReference>
<dbReference type="GO" id="GO:0005524">
    <property type="term" value="F:ATP binding"/>
    <property type="evidence" value="ECO:0007669"/>
    <property type="project" value="UniProtKB-UniRule"/>
</dbReference>
<dbReference type="GO" id="GO:0004822">
    <property type="term" value="F:isoleucine-tRNA ligase activity"/>
    <property type="evidence" value="ECO:0007669"/>
    <property type="project" value="UniProtKB-UniRule"/>
</dbReference>
<dbReference type="GO" id="GO:0000049">
    <property type="term" value="F:tRNA binding"/>
    <property type="evidence" value="ECO:0007669"/>
    <property type="project" value="InterPro"/>
</dbReference>
<dbReference type="GO" id="GO:0008270">
    <property type="term" value="F:zinc ion binding"/>
    <property type="evidence" value="ECO:0007669"/>
    <property type="project" value="UniProtKB-UniRule"/>
</dbReference>
<dbReference type="GO" id="GO:0006428">
    <property type="term" value="P:isoleucyl-tRNA aminoacylation"/>
    <property type="evidence" value="ECO:0007669"/>
    <property type="project" value="UniProtKB-UniRule"/>
</dbReference>
<dbReference type="CDD" id="cd07960">
    <property type="entry name" value="Anticodon_Ia_Ile_BEm"/>
    <property type="match status" value="1"/>
</dbReference>
<dbReference type="CDD" id="cd00818">
    <property type="entry name" value="IleRS_core"/>
    <property type="match status" value="1"/>
</dbReference>
<dbReference type="FunFam" id="1.10.730.20:FF:000001">
    <property type="entry name" value="Isoleucine--tRNA ligase"/>
    <property type="match status" value="1"/>
</dbReference>
<dbReference type="FunFam" id="3.40.50.620:FF:000042">
    <property type="entry name" value="Isoleucine--tRNA ligase"/>
    <property type="match status" value="1"/>
</dbReference>
<dbReference type="FunFam" id="3.40.50.620:FF:000048">
    <property type="entry name" value="Isoleucine--tRNA ligase"/>
    <property type="match status" value="1"/>
</dbReference>
<dbReference type="Gene3D" id="1.10.730.20">
    <property type="match status" value="1"/>
</dbReference>
<dbReference type="Gene3D" id="3.40.50.620">
    <property type="entry name" value="HUPs"/>
    <property type="match status" value="2"/>
</dbReference>
<dbReference type="Gene3D" id="3.90.740.10">
    <property type="entry name" value="Valyl/Leucyl/Isoleucyl-tRNA synthetase, editing domain"/>
    <property type="match status" value="1"/>
</dbReference>
<dbReference type="HAMAP" id="MF_02002">
    <property type="entry name" value="Ile_tRNA_synth_type1"/>
    <property type="match status" value="1"/>
</dbReference>
<dbReference type="InterPro" id="IPR001412">
    <property type="entry name" value="aa-tRNA-synth_I_CS"/>
</dbReference>
<dbReference type="InterPro" id="IPR002300">
    <property type="entry name" value="aa-tRNA-synth_Ia"/>
</dbReference>
<dbReference type="InterPro" id="IPR033708">
    <property type="entry name" value="Anticodon_Ile_BEm"/>
</dbReference>
<dbReference type="InterPro" id="IPR002301">
    <property type="entry name" value="Ile-tRNA-ligase"/>
</dbReference>
<dbReference type="InterPro" id="IPR023585">
    <property type="entry name" value="Ile-tRNA-ligase_type1"/>
</dbReference>
<dbReference type="InterPro" id="IPR050081">
    <property type="entry name" value="Ile-tRNA_ligase"/>
</dbReference>
<dbReference type="InterPro" id="IPR013155">
    <property type="entry name" value="M/V/L/I-tRNA-synth_anticd-bd"/>
</dbReference>
<dbReference type="InterPro" id="IPR014729">
    <property type="entry name" value="Rossmann-like_a/b/a_fold"/>
</dbReference>
<dbReference type="InterPro" id="IPR009080">
    <property type="entry name" value="tRNAsynth_Ia_anticodon-bd"/>
</dbReference>
<dbReference type="InterPro" id="IPR009008">
    <property type="entry name" value="Val/Leu/Ile-tRNA-synth_edit"/>
</dbReference>
<dbReference type="InterPro" id="IPR010663">
    <property type="entry name" value="Znf_FPG/IleRS"/>
</dbReference>
<dbReference type="NCBIfam" id="TIGR00392">
    <property type="entry name" value="ileS"/>
    <property type="match status" value="1"/>
</dbReference>
<dbReference type="PANTHER" id="PTHR42765:SF1">
    <property type="entry name" value="ISOLEUCINE--TRNA LIGASE, MITOCHONDRIAL"/>
    <property type="match status" value="1"/>
</dbReference>
<dbReference type="PANTHER" id="PTHR42765">
    <property type="entry name" value="SOLEUCYL-TRNA SYNTHETASE"/>
    <property type="match status" value="1"/>
</dbReference>
<dbReference type="Pfam" id="PF08264">
    <property type="entry name" value="Anticodon_1"/>
    <property type="match status" value="1"/>
</dbReference>
<dbReference type="Pfam" id="PF00133">
    <property type="entry name" value="tRNA-synt_1"/>
    <property type="match status" value="1"/>
</dbReference>
<dbReference type="Pfam" id="PF06827">
    <property type="entry name" value="zf-FPG_IleRS"/>
    <property type="match status" value="1"/>
</dbReference>
<dbReference type="PRINTS" id="PR00984">
    <property type="entry name" value="TRNASYNTHILE"/>
</dbReference>
<dbReference type="SUPFAM" id="SSF47323">
    <property type="entry name" value="Anticodon-binding domain of a subclass of class I aminoacyl-tRNA synthetases"/>
    <property type="match status" value="1"/>
</dbReference>
<dbReference type="SUPFAM" id="SSF52374">
    <property type="entry name" value="Nucleotidylyl transferase"/>
    <property type="match status" value="1"/>
</dbReference>
<dbReference type="SUPFAM" id="SSF50677">
    <property type="entry name" value="ValRS/IleRS/LeuRS editing domain"/>
    <property type="match status" value="1"/>
</dbReference>
<dbReference type="PROSITE" id="PS00178">
    <property type="entry name" value="AA_TRNA_LIGASE_I"/>
    <property type="match status" value="1"/>
</dbReference>
<protein>
    <recommendedName>
        <fullName evidence="1">Isoleucine--tRNA ligase</fullName>
        <ecNumber evidence="1">6.1.1.5</ecNumber>
    </recommendedName>
    <alternativeName>
        <fullName evidence="1">Isoleucyl-tRNA synthetase</fullName>
        <shortName evidence="1">IleRS</shortName>
    </alternativeName>
</protein>
<reference key="1">
    <citation type="journal article" date="2006" name="Nat. Biotechnol.">
        <title>Complete genome sequence of the entomopathogenic and metabolically versatile soil bacterium Pseudomonas entomophila.</title>
        <authorList>
            <person name="Vodovar N."/>
            <person name="Vallenet D."/>
            <person name="Cruveiller S."/>
            <person name="Rouy Z."/>
            <person name="Barbe V."/>
            <person name="Acosta C."/>
            <person name="Cattolico L."/>
            <person name="Jubin C."/>
            <person name="Lajus A."/>
            <person name="Segurens B."/>
            <person name="Vacherie B."/>
            <person name="Wincker P."/>
            <person name="Weissenbach J."/>
            <person name="Lemaitre B."/>
            <person name="Medigue C."/>
            <person name="Boccard F."/>
        </authorList>
    </citation>
    <scope>NUCLEOTIDE SEQUENCE [LARGE SCALE GENOMIC DNA]</scope>
    <source>
        <strain>L48</strain>
    </source>
</reference>
<proteinExistence type="inferred from homology"/>